<comment type="function">
    <text evidence="1 3">Dermonecrotic toxins cleave the phosphodiester linkage between the phosphate and headgroup of certain phospholipids (sphingolipid and lysolipid substrates), forming an alcohol (often choline) and a cyclic phosphate (By similarity). This toxin acts on sphingomyelin (SM) (By similarity). It may also act on ceramide phosphoethanolamine (CPE), lysophosphatidylcholine (LPC) and lysophosphatidylethanolamine (LPE), but not on lysophosphatidylserine (LPS), and lysophosphatidylglycerol (LPG) (By similarity). It acts by transphosphatidylation, releasing exclusively cyclic phosphate products as second products (By similarity). Induces dermonecrosis, hemolysis, increased vascular permeability, edema, inflammatory response, and platelet aggregation (By similarity).</text>
</comment>
<comment type="catalytic activity">
    <reaction evidence="1">
        <text>an N-(acyl)-sphingosylphosphocholine = an N-(acyl)-sphingosyl-1,3-cyclic phosphate + choline</text>
        <dbReference type="Rhea" id="RHEA:60652"/>
        <dbReference type="ChEBI" id="CHEBI:15354"/>
        <dbReference type="ChEBI" id="CHEBI:64583"/>
        <dbReference type="ChEBI" id="CHEBI:143892"/>
    </reaction>
</comment>
<comment type="catalytic activity">
    <reaction evidence="1">
        <text>an N-(acyl)-sphingosylphosphoethanolamine = an N-(acyl)-sphingosyl-1,3-cyclic phosphate + ethanolamine</text>
        <dbReference type="Rhea" id="RHEA:60648"/>
        <dbReference type="ChEBI" id="CHEBI:57603"/>
        <dbReference type="ChEBI" id="CHEBI:143891"/>
        <dbReference type="ChEBI" id="CHEBI:143892"/>
    </reaction>
</comment>
<comment type="catalytic activity">
    <reaction evidence="1">
        <text>a 1-acyl-sn-glycero-3-phosphocholine = a 1-acyl-sn-glycero-2,3-cyclic phosphate + choline</text>
        <dbReference type="Rhea" id="RHEA:60700"/>
        <dbReference type="ChEBI" id="CHEBI:15354"/>
        <dbReference type="ChEBI" id="CHEBI:58168"/>
        <dbReference type="ChEBI" id="CHEBI:143947"/>
    </reaction>
</comment>
<comment type="catalytic activity">
    <reaction evidence="1">
        <text>a 1-acyl-sn-glycero-3-phosphoethanolamine = a 1-acyl-sn-glycero-2,3-cyclic phosphate + ethanolamine</text>
        <dbReference type="Rhea" id="RHEA:60704"/>
        <dbReference type="ChEBI" id="CHEBI:57603"/>
        <dbReference type="ChEBI" id="CHEBI:64381"/>
        <dbReference type="ChEBI" id="CHEBI:143947"/>
    </reaction>
</comment>
<comment type="cofactor">
    <cofactor evidence="5">
        <name>Mg(2+)</name>
        <dbReference type="ChEBI" id="CHEBI:18420"/>
    </cofactor>
    <text evidence="5">Binds 1 Mg(2+) ion per subunit.</text>
</comment>
<comment type="subcellular location">
    <subcellularLocation>
        <location evidence="9">Secreted</location>
    </subcellularLocation>
</comment>
<comment type="tissue specificity">
    <text evidence="9">Expressed by the venom gland.</text>
</comment>
<comment type="similarity">
    <text evidence="8">Belongs to the arthropod phospholipase D family. Class II subfamily.</text>
</comment>
<comment type="caution">
    <text evidence="1 2 4">The most common activity assay for dermonecrotic toxins detects enzymatic activity by monitoring choline release from substrate. Liberation of choline from sphingomyelin (SM) or lysophosphatidylcholine (LPC) is commonly assumed to result from substrate hydrolysis, giving either ceramide-1-phosphate (C1P) or lysophosphatidic acid (LPA), respectively, as a second product. However, two studies from Lajoie and colleagues (2013 and 2015) report the observation of exclusive formation of cyclic phosphate products as second products, resulting from intramolecular transphosphatidylation. Cyclic phosphates have vastly different biological properties from their monoester counterparts, and they may be relevant to the pathology of brown spider envenomation.</text>
</comment>
<keyword id="KW-0204">Cytolysis</keyword>
<keyword id="KW-1061">Dermonecrotic toxin</keyword>
<keyword id="KW-1015">Disulfide bond</keyword>
<keyword id="KW-0325">Glycoprotein</keyword>
<keyword id="KW-0354">Hemolysis</keyword>
<keyword id="KW-0442">Lipid degradation</keyword>
<keyword id="KW-0443">Lipid metabolism</keyword>
<keyword id="KW-0456">Lyase</keyword>
<keyword id="KW-0460">Magnesium</keyword>
<keyword id="KW-0479">Metal-binding</keyword>
<keyword id="KW-0964">Secreted</keyword>
<keyword id="KW-0800">Toxin</keyword>
<proteinExistence type="evidence at transcript level"/>
<evidence type="ECO:0000250" key="1">
    <source>
        <dbReference type="UniProtKB" id="A0A0D4WTV1"/>
    </source>
</evidence>
<evidence type="ECO:0000250" key="2">
    <source>
        <dbReference type="UniProtKB" id="A0A0D4WV12"/>
    </source>
</evidence>
<evidence type="ECO:0000250" key="3">
    <source>
        <dbReference type="UniProtKB" id="P0CE80"/>
    </source>
</evidence>
<evidence type="ECO:0000250" key="4">
    <source>
        <dbReference type="UniProtKB" id="Q4ZFU2"/>
    </source>
</evidence>
<evidence type="ECO:0000250" key="5">
    <source>
        <dbReference type="UniProtKB" id="Q8I914"/>
    </source>
</evidence>
<evidence type="ECO:0000255" key="6"/>
<evidence type="ECO:0000303" key="7">
    <source>
    </source>
</evidence>
<evidence type="ECO:0000305" key="8"/>
<evidence type="ECO:0000305" key="9">
    <source>
    </source>
</evidence>
<reference key="1">
    <citation type="journal article" date="2009" name="Mol. Biol. Evol.">
        <title>Molecular evolution, functional variation, and proposed nomenclature of the gene family that includes sphingomyelinase D in sicariid spider venoms.</title>
        <authorList>
            <person name="Binford G.J."/>
            <person name="Bodner M.R."/>
            <person name="Cordes M.H."/>
            <person name="Baldwin K.L."/>
            <person name="Rynerson M.R."/>
            <person name="Burns S.N."/>
            <person name="Zobel-Thropp P.A."/>
        </authorList>
    </citation>
    <scope>NUCLEOTIDE SEQUENCE [MRNA]</scope>
    <scope>NOMENCLATURE</scope>
    <source>
        <tissue>Venom gland</tissue>
    </source>
</reference>
<feature type="chain" id="PRO_0000392763" description="Dermonecrotic toxin LapSicTox-alphaIB1ai">
    <location>
        <begin position="1" status="less than"/>
        <end position="273"/>
    </location>
</feature>
<feature type="active site" evidence="5">
    <location>
        <position position="5"/>
    </location>
</feature>
<feature type="active site" description="Nucleophile" evidence="5">
    <location>
        <position position="41"/>
    </location>
</feature>
<feature type="binding site" evidence="5">
    <location>
        <position position="25"/>
    </location>
    <ligand>
        <name>Mg(2+)</name>
        <dbReference type="ChEBI" id="CHEBI:18420"/>
    </ligand>
</feature>
<feature type="binding site" evidence="5">
    <location>
        <position position="27"/>
    </location>
    <ligand>
        <name>Mg(2+)</name>
        <dbReference type="ChEBI" id="CHEBI:18420"/>
    </ligand>
</feature>
<feature type="binding site" evidence="5">
    <location>
        <position position="85"/>
    </location>
    <ligand>
        <name>Mg(2+)</name>
        <dbReference type="ChEBI" id="CHEBI:18420"/>
    </ligand>
</feature>
<feature type="glycosylation site" description="N-linked (GlcNAc...) asparagine" evidence="6">
    <location>
        <position position="250"/>
    </location>
</feature>
<feature type="disulfide bond" evidence="3">
    <location>
        <begin position="45"/>
        <end position="51"/>
    </location>
</feature>
<feature type="disulfide bond" evidence="3">
    <location>
        <begin position="47"/>
        <end position="190"/>
    </location>
</feature>
<feature type="non-terminal residue">
    <location>
        <position position="1"/>
    </location>
</feature>
<protein>
    <recommendedName>
        <fullName evidence="7">Dermonecrotic toxin LapSicTox-alphaIB1ai</fullName>
        <ecNumber evidence="4">4.6.1.-</ecNumber>
    </recommendedName>
    <alternativeName>
        <fullName>Phospholipase D</fullName>
        <shortName>PLD</shortName>
    </alternativeName>
    <alternativeName>
        <fullName>Sphingomyelin phosphodiesterase D</fullName>
        <shortName>SMD</shortName>
        <shortName>SMase D</shortName>
        <shortName>Sphingomyelinase D</shortName>
    </alternativeName>
</protein>
<sequence length="273" mass="30308">WIMGHMVNAIAQIDEFVNLGANSIETDVSFDSSANPEYTYHGVPCDCGGTCTKWEHFNEFLKGLRKATTPGDSKYHEKLVLVVFDLKTGSLYDNQASDAGKKLAKSLLQNYWNNGNNGGRAYIVLSIPNLAHYKLITGFKEALTSEGHPELMDKVGYDFSGNDDIGDVANAYKKAGVTGHVWQSDGITNCLLRGLDRVRKAVANRDSSSGYINKVYYWTVDKRQSTRDALDAGVDGIMTNYPDVIADVLNESAYKAKFRIASYDDNPWETFKN</sequence>
<accession>C0JAV3</accession>
<dbReference type="EC" id="4.6.1.-" evidence="4"/>
<dbReference type="EMBL" id="FJ171388">
    <property type="protein sequence ID" value="ACN48884.1"/>
    <property type="molecule type" value="mRNA"/>
</dbReference>
<dbReference type="SMR" id="C0JAV3"/>
<dbReference type="GO" id="GO:0005576">
    <property type="term" value="C:extracellular region"/>
    <property type="evidence" value="ECO:0007669"/>
    <property type="project" value="UniProtKB-SubCell"/>
</dbReference>
<dbReference type="GO" id="GO:0016829">
    <property type="term" value="F:lyase activity"/>
    <property type="evidence" value="ECO:0007669"/>
    <property type="project" value="UniProtKB-KW"/>
</dbReference>
<dbReference type="GO" id="GO:0046872">
    <property type="term" value="F:metal ion binding"/>
    <property type="evidence" value="ECO:0007669"/>
    <property type="project" value="UniProtKB-KW"/>
</dbReference>
<dbReference type="GO" id="GO:0008081">
    <property type="term" value="F:phosphoric diester hydrolase activity"/>
    <property type="evidence" value="ECO:0007669"/>
    <property type="project" value="InterPro"/>
</dbReference>
<dbReference type="GO" id="GO:0090729">
    <property type="term" value="F:toxin activity"/>
    <property type="evidence" value="ECO:0007669"/>
    <property type="project" value="UniProtKB-KW"/>
</dbReference>
<dbReference type="GO" id="GO:0031640">
    <property type="term" value="P:killing of cells of another organism"/>
    <property type="evidence" value="ECO:0007669"/>
    <property type="project" value="UniProtKB-KW"/>
</dbReference>
<dbReference type="GO" id="GO:0016042">
    <property type="term" value="P:lipid catabolic process"/>
    <property type="evidence" value="ECO:0007669"/>
    <property type="project" value="UniProtKB-KW"/>
</dbReference>
<dbReference type="CDD" id="cd08576">
    <property type="entry name" value="GDPD_like_SMaseD_PLD"/>
    <property type="match status" value="1"/>
</dbReference>
<dbReference type="Gene3D" id="3.20.20.190">
    <property type="entry name" value="Phosphatidylinositol (PI) phosphodiesterase"/>
    <property type="match status" value="1"/>
</dbReference>
<dbReference type="InterPro" id="IPR017946">
    <property type="entry name" value="PLC-like_Pdiesterase_TIM-brl"/>
</dbReference>
<dbReference type="Pfam" id="PF13653">
    <property type="entry name" value="GDPD_2"/>
    <property type="match status" value="1"/>
</dbReference>
<dbReference type="SUPFAM" id="SSF51695">
    <property type="entry name" value="PLC-like phosphodiesterases"/>
    <property type="match status" value="1"/>
</dbReference>
<organism>
    <name type="scientific">Loxosceles apachea</name>
    <name type="common">Apache recluse spider</name>
    <dbReference type="NCBI Taxonomy" id="571518"/>
    <lineage>
        <taxon>Eukaryota</taxon>
        <taxon>Metazoa</taxon>
        <taxon>Ecdysozoa</taxon>
        <taxon>Arthropoda</taxon>
        <taxon>Chelicerata</taxon>
        <taxon>Arachnida</taxon>
        <taxon>Araneae</taxon>
        <taxon>Araneomorphae</taxon>
        <taxon>Haplogynae</taxon>
        <taxon>Scytodoidea</taxon>
        <taxon>Sicariidae</taxon>
        <taxon>Loxosceles</taxon>
    </lineage>
</organism>
<name>A1KA1_LOXAP</name>